<name>RSMA_CHRSD</name>
<proteinExistence type="inferred from homology"/>
<evidence type="ECO:0000255" key="1">
    <source>
        <dbReference type="HAMAP-Rule" id="MF_00607"/>
    </source>
</evidence>
<evidence type="ECO:0000256" key="2">
    <source>
        <dbReference type="SAM" id="MobiDB-lite"/>
    </source>
</evidence>
<keyword id="KW-0963">Cytoplasm</keyword>
<keyword id="KW-0489">Methyltransferase</keyword>
<keyword id="KW-1185">Reference proteome</keyword>
<keyword id="KW-0694">RNA-binding</keyword>
<keyword id="KW-0698">rRNA processing</keyword>
<keyword id="KW-0949">S-adenosyl-L-methionine</keyword>
<keyword id="KW-0808">Transferase</keyword>
<dbReference type="EC" id="2.1.1.182" evidence="1"/>
<dbReference type="EMBL" id="CP000285">
    <property type="protein sequence ID" value="ABE58277.1"/>
    <property type="molecule type" value="Genomic_DNA"/>
</dbReference>
<dbReference type="SMR" id="Q1QZ31"/>
<dbReference type="STRING" id="290398.Csal_0920"/>
<dbReference type="KEGG" id="csa:Csal_0920"/>
<dbReference type="eggNOG" id="COG0030">
    <property type="taxonomic scope" value="Bacteria"/>
</dbReference>
<dbReference type="HOGENOM" id="CLU_041220_0_1_6"/>
<dbReference type="OrthoDB" id="9814755at2"/>
<dbReference type="Proteomes" id="UP000000239">
    <property type="component" value="Chromosome"/>
</dbReference>
<dbReference type="GO" id="GO:0005829">
    <property type="term" value="C:cytosol"/>
    <property type="evidence" value="ECO:0007669"/>
    <property type="project" value="TreeGrafter"/>
</dbReference>
<dbReference type="GO" id="GO:0052908">
    <property type="term" value="F:16S rRNA (adenine(1518)-N(6)/adenine(1519)-N(6))-dimethyltransferase activity"/>
    <property type="evidence" value="ECO:0007669"/>
    <property type="project" value="UniProtKB-EC"/>
</dbReference>
<dbReference type="GO" id="GO:0003723">
    <property type="term" value="F:RNA binding"/>
    <property type="evidence" value="ECO:0007669"/>
    <property type="project" value="UniProtKB-KW"/>
</dbReference>
<dbReference type="FunFam" id="1.10.8.100:FF:000001">
    <property type="entry name" value="Ribosomal RNA small subunit methyltransferase A"/>
    <property type="match status" value="1"/>
</dbReference>
<dbReference type="Gene3D" id="1.10.8.100">
    <property type="entry name" value="Ribosomal RNA adenine dimethylase-like, domain 2"/>
    <property type="match status" value="1"/>
</dbReference>
<dbReference type="Gene3D" id="3.40.50.150">
    <property type="entry name" value="Vaccinia Virus protein VP39"/>
    <property type="match status" value="1"/>
</dbReference>
<dbReference type="HAMAP" id="MF_00607">
    <property type="entry name" value="16SrRNA_methyltr_A"/>
    <property type="match status" value="1"/>
</dbReference>
<dbReference type="InterPro" id="IPR001737">
    <property type="entry name" value="KsgA/Erm"/>
</dbReference>
<dbReference type="InterPro" id="IPR023165">
    <property type="entry name" value="rRNA_Ade_diMease-like_C"/>
</dbReference>
<dbReference type="InterPro" id="IPR020596">
    <property type="entry name" value="rRNA_Ade_Mease_Trfase_CS"/>
</dbReference>
<dbReference type="InterPro" id="IPR020598">
    <property type="entry name" value="rRNA_Ade_methylase_Trfase_N"/>
</dbReference>
<dbReference type="InterPro" id="IPR011530">
    <property type="entry name" value="rRNA_adenine_dimethylase"/>
</dbReference>
<dbReference type="InterPro" id="IPR029063">
    <property type="entry name" value="SAM-dependent_MTases_sf"/>
</dbReference>
<dbReference type="NCBIfam" id="TIGR00755">
    <property type="entry name" value="ksgA"/>
    <property type="match status" value="1"/>
</dbReference>
<dbReference type="PANTHER" id="PTHR11727">
    <property type="entry name" value="DIMETHYLADENOSINE TRANSFERASE"/>
    <property type="match status" value="1"/>
</dbReference>
<dbReference type="PANTHER" id="PTHR11727:SF7">
    <property type="entry name" value="DIMETHYLADENOSINE TRANSFERASE-RELATED"/>
    <property type="match status" value="1"/>
</dbReference>
<dbReference type="Pfam" id="PF00398">
    <property type="entry name" value="RrnaAD"/>
    <property type="match status" value="1"/>
</dbReference>
<dbReference type="SMART" id="SM00650">
    <property type="entry name" value="rADc"/>
    <property type="match status" value="1"/>
</dbReference>
<dbReference type="SUPFAM" id="SSF53335">
    <property type="entry name" value="S-adenosyl-L-methionine-dependent methyltransferases"/>
    <property type="match status" value="1"/>
</dbReference>
<dbReference type="PROSITE" id="PS01131">
    <property type="entry name" value="RRNA_A_DIMETH"/>
    <property type="match status" value="1"/>
</dbReference>
<dbReference type="PROSITE" id="PS51689">
    <property type="entry name" value="SAM_RNA_A_N6_MT"/>
    <property type="match status" value="1"/>
</dbReference>
<protein>
    <recommendedName>
        <fullName evidence="1">Ribosomal RNA small subunit methyltransferase A</fullName>
        <ecNumber evidence="1">2.1.1.182</ecNumber>
    </recommendedName>
    <alternativeName>
        <fullName evidence="1">16S rRNA (adenine(1518)-N(6)/adenine(1519)-N(6))-dimethyltransferase</fullName>
    </alternativeName>
    <alternativeName>
        <fullName evidence="1">16S rRNA dimethyladenosine transferase</fullName>
    </alternativeName>
    <alternativeName>
        <fullName evidence="1">16S rRNA dimethylase</fullName>
    </alternativeName>
    <alternativeName>
        <fullName evidence="1">S-adenosylmethionine-6-N', N'-adenosyl(rRNA) dimethyltransferase</fullName>
    </alternativeName>
</protein>
<gene>
    <name evidence="1" type="primary">rsmA</name>
    <name evidence="1" type="synonym">ksgA</name>
    <name type="ordered locus">Csal_0920</name>
</gene>
<sequence length="282" mass="31423">MPDFPKEHATPMSNRPPAHQARKRFGQNFLRDTGVIDRIVRVIAPRSDQRLIEIGPGQGALTEPLLDAVGALEVIELDRDLIPGLRVQFFNYPDFVIHEGDALQFDFAALAAEGETPGKPLRVIGNLPYNISTPLIFHLLTARGAIADMHFMLQREVVERLAATPGSAAWGRLSVMTQYHCRVDNLFVVPAEAFTPRPKVESAIVRLIPHDEPPHVAHDEALFGDIVREAFGQRRKTLRNNLKTRLDDTAWAALDIDPGRRPQTLSVEELVRIANHVAETAP</sequence>
<reference key="1">
    <citation type="journal article" date="2011" name="Stand. Genomic Sci.">
        <title>Complete genome sequence of the halophilic and highly halotolerant Chromohalobacter salexigens type strain (1H11(T)).</title>
        <authorList>
            <person name="Copeland A."/>
            <person name="O'Connor K."/>
            <person name="Lucas S."/>
            <person name="Lapidus A."/>
            <person name="Berry K.W."/>
            <person name="Detter J.C."/>
            <person name="Del Rio T.G."/>
            <person name="Hammon N."/>
            <person name="Dalin E."/>
            <person name="Tice H."/>
            <person name="Pitluck S."/>
            <person name="Bruce D."/>
            <person name="Goodwin L."/>
            <person name="Han C."/>
            <person name="Tapia R."/>
            <person name="Saunders E."/>
            <person name="Schmutz J."/>
            <person name="Brettin T."/>
            <person name="Larimer F."/>
            <person name="Land M."/>
            <person name="Hauser L."/>
            <person name="Vargas C."/>
            <person name="Nieto J.J."/>
            <person name="Kyrpides N.C."/>
            <person name="Ivanova N."/>
            <person name="Goker M."/>
            <person name="Klenk H.P."/>
            <person name="Csonka L.N."/>
            <person name="Woyke T."/>
        </authorList>
    </citation>
    <scope>NUCLEOTIDE SEQUENCE [LARGE SCALE GENOMIC DNA]</scope>
    <source>
        <strain>ATCC BAA-138 / DSM 3043 / CIP 106854 / NCIMB 13768 / 1H11</strain>
    </source>
</reference>
<accession>Q1QZ31</accession>
<comment type="function">
    <text evidence="1">Specifically dimethylates two adjacent adenosines (A1518 and A1519) in the loop of a conserved hairpin near the 3'-end of 16S rRNA in the 30S particle. May play a critical role in biogenesis of 30S subunits.</text>
</comment>
<comment type="catalytic activity">
    <reaction evidence="1">
        <text>adenosine(1518)/adenosine(1519) in 16S rRNA + 4 S-adenosyl-L-methionine = N(6)-dimethyladenosine(1518)/N(6)-dimethyladenosine(1519) in 16S rRNA + 4 S-adenosyl-L-homocysteine + 4 H(+)</text>
        <dbReference type="Rhea" id="RHEA:19609"/>
        <dbReference type="Rhea" id="RHEA-COMP:10232"/>
        <dbReference type="Rhea" id="RHEA-COMP:10233"/>
        <dbReference type="ChEBI" id="CHEBI:15378"/>
        <dbReference type="ChEBI" id="CHEBI:57856"/>
        <dbReference type="ChEBI" id="CHEBI:59789"/>
        <dbReference type="ChEBI" id="CHEBI:74411"/>
        <dbReference type="ChEBI" id="CHEBI:74493"/>
        <dbReference type="EC" id="2.1.1.182"/>
    </reaction>
</comment>
<comment type="subcellular location">
    <subcellularLocation>
        <location evidence="1">Cytoplasm</location>
    </subcellularLocation>
</comment>
<comment type="similarity">
    <text evidence="1">Belongs to the class I-like SAM-binding methyltransferase superfamily. rRNA adenine N(6)-methyltransferase family. RsmA subfamily.</text>
</comment>
<feature type="chain" id="PRO_0000257273" description="Ribosomal RNA small subunit methyltransferase A">
    <location>
        <begin position="1"/>
        <end position="282"/>
    </location>
</feature>
<feature type="region of interest" description="Disordered" evidence="2">
    <location>
        <begin position="1"/>
        <end position="21"/>
    </location>
</feature>
<feature type="binding site" evidence="1">
    <location>
        <position position="28"/>
    </location>
    <ligand>
        <name>S-adenosyl-L-methionine</name>
        <dbReference type="ChEBI" id="CHEBI:59789"/>
    </ligand>
</feature>
<feature type="binding site" evidence="1">
    <location>
        <position position="30"/>
    </location>
    <ligand>
        <name>S-adenosyl-L-methionine</name>
        <dbReference type="ChEBI" id="CHEBI:59789"/>
    </ligand>
</feature>
<feature type="binding site" evidence="1">
    <location>
        <position position="55"/>
    </location>
    <ligand>
        <name>S-adenosyl-L-methionine</name>
        <dbReference type="ChEBI" id="CHEBI:59789"/>
    </ligand>
</feature>
<feature type="binding site" evidence="1">
    <location>
        <position position="76"/>
    </location>
    <ligand>
        <name>S-adenosyl-L-methionine</name>
        <dbReference type="ChEBI" id="CHEBI:59789"/>
    </ligand>
</feature>
<feature type="binding site" evidence="1">
    <location>
        <position position="101"/>
    </location>
    <ligand>
        <name>S-adenosyl-L-methionine</name>
        <dbReference type="ChEBI" id="CHEBI:59789"/>
    </ligand>
</feature>
<feature type="binding site" evidence="1">
    <location>
        <position position="126"/>
    </location>
    <ligand>
        <name>S-adenosyl-L-methionine</name>
        <dbReference type="ChEBI" id="CHEBI:59789"/>
    </ligand>
</feature>
<organism>
    <name type="scientific">Chromohalobacter salexigens (strain ATCC BAA-138 / DSM 3043 / CIP 106854 / NCIMB 13768 / 1H11)</name>
    <dbReference type="NCBI Taxonomy" id="290398"/>
    <lineage>
        <taxon>Bacteria</taxon>
        <taxon>Pseudomonadati</taxon>
        <taxon>Pseudomonadota</taxon>
        <taxon>Gammaproteobacteria</taxon>
        <taxon>Oceanospirillales</taxon>
        <taxon>Halomonadaceae</taxon>
        <taxon>Chromohalobacter</taxon>
    </lineage>
</organism>